<protein>
    <recommendedName>
        <fullName evidence="1">Probable lipid kinase YegS</fullName>
        <ecNumber evidence="1">2.7.1.-</ecNumber>
    </recommendedName>
</protein>
<feature type="chain" id="PRO_0000292160" description="Probable lipid kinase YegS">
    <location>
        <begin position="1"/>
        <end position="299"/>
    </location>
</feature>
<feature type="domain" description="DAGKc" evidence="1">
    <location>
        <begin position="2"/>
        <end position="133"/>
    </location>
</feature>
<feature type="active site" description="Proton acceptor" evidence="1">
    <location>
        <position position="271"/>
    </location>
</feature>
<feature type="binding site" evidence="1">
    <location>
        <position position="40"/>
    </location>
    <ligand>
        <name>ATP</name>
        <dbReference type="ChEBI" id="CHEBI:30616"/>
    </ligand>
</feature>
<feature type="binding site" evidence="1">
    <location>
        <begin position="66"/>
        <end position="72"/>
    </location>
    <ligand>
        <name>ATP</name>
        <dbReference type="ChEBI" id="CHEBI:30616"/>
    </ligand>
</feature>
<feature type="binding site" evidence="1">
    <location>
        <position position="95"/>
    </location>
    <ligand>
        <name>ATP</name>
        <dbReference type="ChEBI" id="CHEBI:30616"/>
    </ligand>
</feature>
<feature type="binding site" evidence="1">
    <location>
        <position position="215"/>
    </location>
    <ligand>
        <name>Mg(2+)</name>
        <dbReference type="ChEBI" id="CHEBI:18420"/>
    </ligand>
</feature>
<feature type="binding site" evidence="1">
    <location>
        <position position="218"/>
    </location>
    <ligand>
        <name>Mg(2+)</name>
        <dbReference type="ChEBI" id="CHEBI:18420"/>
    </ligand>
</feature>
<feature type="binding site" evidence="1">
    <location>
        <position position="220"/>
    </location>
    <ligand>
        <name>Mg(2+)</name>
        <dbReference type="ChEBI" id="CHEBI:18420"/>
    </ligand>
</feature>
<feature type="sequence conflict" description="In Ref. 2; AAP17508." evidence="2" ref="2">
    <original>C</original>
    <variation>S</variation>
    <location>
        <position position="74"/>
    </location>
</feature>
<accession>Q83KI0</accession>
<accession>Q7UCB0</accession>
<comment type="function">
    <text evidence="1">Probably phosphorylates lipids; the in vivo substrate is unknown.</text>
</comment>
<comment type="cofactor">
    <cofactor evidence="1">
        <name>Mg(2+)</name>
        <dbReference type="ChEBI" id="CHEBI:18420"/>
    </cofactor>
    <cofactor evidence="1">
        <name>Ca(2+)</name>
        <dbReference type="ChEBI" id="CHEBI:29108"/>
    </cofactor>
    <text evidence="1">Binds 1 Mg(2+) ion per subunit. Ca(2+) may be able to substitute.</text>
</comment>
<comment type="subcellular location">
    <subcellularLocation>
        <location evidence="1">Cytoplasm</location>
    </subcellularLocation>
</comment>
<comment type="similarity">
    <text evidence="1">Belongs to the diacylglycerol/lipid kinase family. YegS lipid kinase subfamily.</text>
</comment>
<dbReference type="EC" id="2.7.1.-" evidence="1"/>
<dbReference type="EMBL" id="AE005674">
    <property type="protein sequence ID" value="AAN43682.1"/>
    <property type="molecule type" value="Genomic_DNA"/>
</dbReference>
<dbReference type="EMBL" id="AE014073">
    <property type="protein sequence ID" value="AAP17508.1"/>
    <property type="molecule type" value="Genomic_DNA"/>
</dbReference>
<dbReference type="RefSeq" id="NP_707975.1">
    <property type="nucleotide sequence ID" value="NC_004337.2"/>
</dbReference>
<dbReference type="RefSeq" id="WP_000807344.1">
    <property type="nucleotide sequence ID" value="NZ_CP123365.1"/>
</dbReference>
<dbReference type="SMR" id="Q83KI0"/>
<dbReference type="STRING" id="198214.SF2149"/>
<dbReference type="PaxDb" id="198214-SF2149"/>
<dbReference type="GeneID" id="1025346"/>
<dbReference type="KEGG" id="sfl:SF2149"/>
<dbReference type="KEGG" id="sfx:S2274"/>
<dbReference type="PATRIC" id="fig|198214.7.peg.2563"/>
<dbReference type="HOGENOM" id="CLU_045532_1_1_6"/>
<dbReference type="Proteomes" id="UP000001006">
    <property type="component" value="Chromosome"/>
</dbReference>
<dbReference type="Proteomes" id="UP000002673">
    <property type="component" value="Chromosome"/>
</dbReference>
<dbReference type="GO" id="GO:0005737">
    <property type="term" value="C:cytoplasm"/>
    <property type="evidence" value="ECO:0007669"/>
    <property type="project" value="UniProtKB-SubCell"/>
</dbReference>
<dbReference type="GO" id="GO:0005886">
    <property type="term" value="C:plasma membrane"/>
    <property type="evidence" value="ECO:0007669"/>
    <property type="project" value="TreeGrafter"/>
</dbReference>
<dbReference type="GO" id="GO:0005524">
    <property type="term" value="F:ATP binding"/>
    <property type="evidence" value="ECO:0007669"/>
    <property type="project" value="UniProtKB-UniRule"/>
</dbReference>
<dbReference type="GO" id="GO:0001727">
    <property type="term" value="F:lipid kinase activity"/>
    <property type="evidence" value="ECO:0007669"/>
    <property type="project" value="UniProtKB-UniRule"/>
</dbReference>
<dbReference type="GO" id="GO:0000287">
    <property type="term" value="F:magnesium ion binding"/>
    <property type="evidence" value="ECO:0007669"/>
    <property type="project" value="UniProtKB-UniRule"/>
</dbReference>
<dbReference type="GO" id="GO:0008654">
    <property type="term" value="P:phospholipid biosynthetic process"/>
    <property type="evidence" value="ECO:0007669"/>
    <property type="project" value="UniProtKB-UniRule"/>
</dbReference>
<dbReference type="FunFam" id="2.60.200.40:FF:000008">
    <property type="entry name" value="Probable lipid kinase YegS"/>
    <property type="match status" value="1"/>
</dbReference>
<dbReference type="FunFam" id="3.40.50.10330:FF:000008">
    <property type="entry name" value="Probable lipid kinase YegS"/>
    <property type="match status" value="1"/>
</dbReference>
<dbReference type="Gene3D" id="2.60.200.40">
    <property type="match status" value="1"/>
</dbReference>
<dbReference type="Gene3D" id="3.40.50.10330">
    <property type="entry name" value="Probable inorganic polyphosphate/atp-NAD kinase, domain 1"/>
    <property type="match status" value="1"/>
</dbReference>
<dbReference type="HAMAP" id="MF_01377">
    <property type="entry name" value="YegS"/>
    <property type="match status" value="1"/>
</dbReference>
<dbReference type="InterPro" id="IPR017438">
    <property type="entry name" value="ATP-NAD_kinase_N"/>
</dbReference>
<dbReference type="InterPro" id="IPR005218">
    <property type="entry name" value="Diacylglycerol/lipid_kinase"/>
</dbReference>
<dbReference type="InterPro" id="IPR001206">
    <property type="entry name" value="Diacylglycerol_kinase_cat_dom"/>
</dbReference>
<dbReference type="InterPro" id="IPR022433">
    <property type="entry name" value="Lip_kinase_YegS"/>
</dbReference>
<dbReference type="InterPro" id="IPR050187">
    <property type="entry name" value="Lipid_Phosphate_FormReg"/>
</dbReference>
<dbReference type="InterPro" id="IPR016064">
    <property type="entry name" value="NAD/diacylglycerol_kinase_sf"/>
</dbReference>
<dbReference type="InterPro" id="IPR045540">
    <property type="entry name" value="YegS/DAGK_C"/>
</dbReference>
<dbReference type="NCBIfam" id="TIGR03702">
    <property type="entry name" value="lip_kinase_YegS"/>
    <property type="match status" value="1"/>
</dbReference>
<dbReference type="NCBIfam" id="NF009602">
    <property type="entry name" value="PRK13054.1"/>
    <property type="match status" value="1"/>
</dbReference>
<dbReference type="NCBIfam" id="TIGR00147">
    <property type="entry name" value="YegS/Rv2252/BmrU family lipid kinase"/>
    <property type="match status" value="1"/>
</dbReference>
<dbReference type="PANTHER" id="PTHR12358:SF106">
    <property type="entry name" value="LIPID KINASE YEGS"/>
    <property type="match status" value="1"/>
</dbReference>
<dbReference type="PANTHER" id="PTHR12358">
    <property type="entry name" value="SPHINGOSINE KINASE"/>
    <property type="match status" value="1"/>
</dbReference>
<dbReference type="Pfam" id="PF00781">
    <property type="entry name" value="DAGK_cat"/>
    <property type="match status" value="1"/>
</dbReference>
<dbReference type="Pfam" id="PF19279">
    <property type="entry name" value="YegS_C"/>
    <property type="match status" value="1"/>
</dbReference>
<dbReference type="SMART" id="SM00046">
    <property type="entry name" value="DAGKc"/>
    <property type="match status" value="1"/>
</dbReference>
<dbReference type="SUPFAM" id="SSF111331">
    <property type="entry name" value="NAD kinase/diacylglycerol kinase-like"/>
    <property type="match status" value="1"/>
</dbReference>
<dbReference type="PROSITE" id="PS50146">
    <property type="entry name" value="DAGK"/>
    <property type="match status" value="1"/>
</dbReference>
<keyword id="KW-0067">ATP-binding</keyword>
<keyword id="KW-0963">Cytoplasm</keyword>
<keyword id="KW-0418">Kinase</keyword>
<keyword id="KW-0444">Lipid biosynthesis</keyword>
<keyword id="KW-0443">Lipid metabolism</keyword>
<keyword id="KW-0460">Magnesium</keyword>
<keyword id="KW-0479">Metal-binding</keyword>
<keyword id="KW-0547">Nucleotide-binding</keyword>
<keyword id="KW-0594">Phospholipid biosynthesis</keyword>
<keyword id="KW-1208">Phospholipid metabolism</keyword>
<keyword id="KW-1185">Reference proteome</keyword>
<keyword id="KW-0808">Transferase</keyword>
<organism>
    <name type="scientific">Shigella flexneri</name>
    <dbReference type="NCBI Taxonomy" id="623"/>
    <lineage>
        <taxon>Bacteria</taxon>
        <taxon>Pseudomonadati</taxon>
        <taxon>Pseudomonadota</taxon>
        <taxon>Gammaproteobacteria</taxon>
        <taxon>Enterobacterales</taxon>
        <taxon>Enterobacteriaceae</taxon>
        <taxon>Shigella</taxon>
    </lineage>
</organism>
<gene>
    <name evidence="1" type="primary">yegS</name>
    <name type="ordered locus">SF2149</name>
    <name type="ordered locus">S2274</name>
</gene>
<proteinExistence type="inferred from homology"/>
<sequence>MAEFPASLLILNGKSTDNLPLREAIMLLREEGMTIHVRVTWEKGDAARFVEEARKLGVATVIAGGGDGTINEVCTALIQCEGDDIPALGILPLGTANDFATSVGIPEALDKALKLAIAGNAIAIDMAQVNKQTCFINMATGGFGTRITTETPEKLKAALGGVSYIIHGLMRMDTLQPDRCEIRGENFHWQGDALVIGIGNGRQAGGGQQLCPNALINDGLLQLRIFTGDEILPALVSTLKSDEDNPNIIEGASSWFDIQAPHEITFNLDGEPLSGQNFHIEILPAALRCRLPPDCPLLR</sequence>
<reference key="1">
    <citation type="journal article" date="2002" name="Nucleic Acids Res.">
        <title>Genome sequence of Shigella flexneri 2a: insights into pathogenicity through comparison with genomes of Escherichia coli K12 and O157.</title>
        <authorList>
            <person name="Jin Q."/>
            <person name="Yuan Z."/>
            <person name="Xu J."/>
            <person name="Wang Y."/>
            <person name="Shen Y."/>
            <person name="Lu W."/>
            <person name="Wang J."/>
            <person name="Liu H."/>
            <person name="Yang J."/>
            <person name="Yang F."/>
            <person name="Zhang X."/>
            <person name="Zhang J."/>
            <person name="Yang G."/>
            <person name="Wu H."/>
            <person name="Qu D."/>
            <person name="Dong J."/>
            <person name="Sun L."/>
            <person name="Xue Y."/>
            <person name="Zhao A."/>
            <person name="Gao Y."/>
            <person name="Zhu J."/>
            <person name="Kan B."/>
            <person name="Ding K."/>
            <person name="Chen S."/>
            <person name="Cheng H."/>
            <person name="Yao Z."/>
            <person name="He B."/>
            <person name="Chen R."/>
            <person name="Ma D."/>
            <person name="Qiang B."/>
            <person name="Wen Y."/>
            <person name="Hou Y."/>
            <person name="Yu J."/>
        </authorList>
    </citation>
    <scope>NUCLEOTIDE SEQUENCE [LARGE SCALE GENOMIC DNA]</scope>
    <source>
        <strain>301 / Serotype 2a</strain>
    </source>
</reference>
<reference key="2">
    <citation type="journal article" date="2003" name="Infect. Immun.">
        <title>Complete genome sequence and comparative genomics of Shigella flexneri serotype 2a strain 2457T.</title>
        <authorList>
            <person name="Wei J."/>
            <person name="Goldberg M.B."/>
            <person name="Burland V."/>
            <person name="Venkatesan M.M."/>
            <person name="Deng W."/>
            <person name="Fournier G."/>
            <person name="Mayhew G.F."/>
            <person name="Plunkett G. III"/>
            <person name="Rose D.J."/>
            <person name="Darling A."/>
            <person name="Mau B."/>
            <person name="Perna N.T."/>
            <person name="Payne S.M."/>
            <person name="Runyen-Janecky L.J."/>
            <person name="Zhou S."/>
            <person name="Schwartz D.C."/>
            <person name="Blattner F.R."/>
        </authorList>
    </citation>
    <scope>NUCLEOTIDE SEQUENCE [LARGE SCALE GENOMIC DNA]</scope>
    <source>
        <strain>ATCC 700930 / 2457T / Serotype 2a</strain>
    </source>
</reference>
<name>YEGS_SHIFL</name>
<evidence type="ECO:0000255" key="1">
    <source>
        <dbReference type="HAMAP-Rule" id="MF_01377"/>
    </source>
</evidence>
<evidence type="ECO:0000305" key="2"/>